<feature type="signal peptide" evidence="1">
    <location>
        <begin position="1"/>
        <end position="17"/>
    </location>
</feature>
<feature type="chain" id="PRO_0000436663" description="Envelope glycoprotein H" evidence="1">
    <location>
        <begin position="18"/>
        <end position="841"/>
    </location>
</feature>
<feature type="topological domain" description="Virion surface" evidence="1">
    <location>
        <begin position="18"/>
        <end position="802"/>
    </location>
</feature>
<feature type="transmembrane region" description="Helical" evidence="1">
    <location>
        <begin position="803"/>
        <end position="823"/>
    </location>
</feature>
<feature type="topological domain" description="Intravirion" evidence="1">
    <location>
        <begin position="824"/>
        <end position="841"/>
    </location>
</feature>
<feature type="region of interest" description="Interaction with gL" evidence="1">
    <location>
        <begin position="246"/>
        <end position="309"/>
    </location>
</feature>
<feature type="glycosylation site" description="N-linked (GlcNAc...) asparagine; by host" evidence="1">
    <location>
        <position position="18"/>
    </location>
</feature>
<feature type="glycosylation site" description="N-linked (GlcNAc...) asparagine; by host" evidence="1">
    <location>
        <position position="45"/>
    </location>
</feature>
<feature type="glycosylation site" description="N-linked (GlcNAc...) asparagine; by host" evidence="1">
    <location>
        <position position="217"/>
    </location>
</feature>
<feature type="glycosylation site" description="N-linked (GlcNAc...) asparagine; by host" evidence="1">
    <location>
        <position position="317"/>
    </location>
</feature>
<feature type="glycosylation site" description="N-linked (GlcNAc...) asparagine; by host" evidence="1">
    <location>
        <position position="499"/>
    </location>
</feature>
<feature type="glycosylation site" description="N-linked (GlcNAc...) asparagine; by host" evidence="1">
    <location>
        <position position="522"/>
    </location>
</feature>
<feature type="glycosylation site" description="N-linked (GlcNAc...) asparagine; by host" evidence="1">
    <location>
        <position position="760"/>
    </location>
</feature>
<feature type="glycosylation site" description="N-linked (GlcNAc...) asparagine; by host" evidence="1">
    <location>
        <position position="783"/>
    </location>
</feature>
<dbReference type="EMBL" id="X04370">
    <property type="protein sequence ID" value="CAA27920.1"/>
    <property type="molecule type" value="Genomic_DNA"/>
</dbReference>
<dbReference type="PIR" id="B27341">
    <property type="entry name" value="VGBE37"/>
</dbReference>
<dbReference type="SMR" id="P09260"/>
<dbReference type="GlyCosmos" id="P09260">
    <property type="glycosylation" value="8 sites, No reported glycans"/>
</dbReference>
<dbReference type="Proteomes" id="UP000002602">
    <property type="component" value="Genome"/>
</dbReference>
<dbReference type="GO" id="GO:0044175">
    <property type="term" value="C:host cell endosome membrane"/>
    <property type="evidence" value="ECO:0007669"/>
    <property type="project" value="UniProtKB-SubCell"/>
</dbReference>
<dbReference type="GO" id="GO:0020002">
    <property type="term" value="C:host cell plasma membrane"/>
    <property type="evidence" value="ECO:0007669"/>
    <property type="project" value="UniProtKB-SubCell"/>
</dbReference>
<dbReference type="GO" id="GO:0016020">
    <property type="term" value="C:membrane"/>
    <property type="evidence" value="ECO:0007669"/>
    <property type="project" value="UniProtKB-KW"/>
</dbReference>
<dbReference type="GO" id="GO:0019031">
    <property type="term" value="C:viral envelope"/>
    <property type="evidence" value="ECO:0007669"/>
    <property type="project" value="UniProtKB-KW"/>
</dbReference>
<dbReference type="GO" id="GO:0055036">
    <property type="term" value="C:virion membrane"/>
    <property type="evidence" value="ECO:0007669"/>
    <property type="project" value="UniProtKB-SubCell"/>
</dbReference>
<dbReference type="GO" id="GO:0019064">
    <property type="term" value="P:fusion of virus membrane with host plasma membrane"/>
    <property type="evidence" value="ECO:0007669"/>
    <property type="project" value="UniProtKB-KW"/>
</dbReference>
<dbReference type="GO" id="GO:0046718">
    <property type="term" value="P:symbiont entry into host cell"/>
    <property type="evidence" value="ECO:0007669"/>
    <property type="project" value="UniProtKB-KW"/>
</dbReference>
<dbReference type="Gene3D" id="1.20.58.1340">
    <property type="match status" value="1"/>
</dbReference>
<dbReference type="Gene3D" id="3.30.500.50">
    <property type="match status" value="1"/>
</dbReference>
<dbReference type="Gene3D" id="2.60.40.3190">
    <property type="entry name" value="Herpesvirus glycoprotein H, C-terminal domain"/>
    <property type="match status" value="1"/>
</dbReference>
<dbReference type="HAMAP" id="MF_04033">
    <property type="entry name" value="HSV_GH"/>
    <property type="match status" value="1"/>
</dbReference>
<dbReference type="InterPro" id="IPR003493">
    <property type="entry name" value="Herpes_gH"/>
</dbReference>
<dbReference type="InterPro" id="IPR035305">
    <property type="entry name" value="Herpes_glycoH_C"/>
</dbReference>
<dbReference type="InterPro" id="IPR038172">
    <property type="entry name" value="Herpes_glycoH_C_sf"/>
</dbReference>
<dbReference type="Pfam" id="PF17488">
    <property type="entry name" value="Herpes_glycoH_C"/>
    <property type="match status" value="1"/>
</dbReference>
<dbReference type="Pfam" id="PF02489">
    <property type="entry name" value="Herpes_glycop_H"/>
    <property type="match status" value="1"/>
</dbReference>
<name>GH_VZVD</name>
<reference key="1">
    <citation type="journal article" date="1986" name="J. Gen. Virol.">
        <title>The complete DNA sequence of varicella-zoster virus.</title>
        <authorList>
            <person name="Davison A.J."/>
            <person name="Scott J.E."/>
        </authorList>
    </citation>
    <scope>NUCLEOTIDE SEQUENCE [LARGE SCALE GENOMIC DNA]</scope>
</reference>
<reference key="2">
    <citation type="journal article" date="2005" name="J. Virol.">
        <title>Incorporation of three endocytosed varicella-zoster virus glycoproteins, gE, gH, and gB, into the virion envelope.</title>
        <authorList>
            <person name="Maresova L."/>
            <person name="Pasieka T.J."/>
            <person name="Homan E."/>
            <person name="Gerday E."/>
            <person name="Grose C."/>
        </authorList>
    </citation>
    <scope>SUBCELLULAR LOCATION</scope>
    <source>
        <strain>VZV-32</strain>
    </source>
</reference>
<organism>
    <name type="scientific">Varicella-zoster virus (strain Dumas)</name>
    <name type="common">HHV-3</name>
    <name type="synonym">Human herpesvirus 3</name>
    <dbReference type="NCBI Taxonomy" id="10338"/>
    <lineage>
        <taxon>Viruses</taxon>
        <taxon>Duplodnaviria</taxon>
        <taxon>Heunggongvirae</taxon>
        <taxon>Peploviricota</taxon>
        <taxon>Herviviricetes</taxon>
        <taxon>Herpesvirales</taxon>
        <taxon>Orthoherpesviridae</taxon>
        <taxon>Alphaherpesvirinae</taxon>
        <taxon>Varicellovirus</taxon>
        <taxon>Varicellovirus humanalpha3</taxon>
        <taxon>Human herpesvirus 3</taxon>
    </lineage>
</organism>
<proteinExistence type="inferred from homology"/>
<sequence length="841" mass="93652">MFALVLAVVILPLWTTANKSYVTPTPATRSIGHMSALLREYSDRNMSLKLEAFYPTGFDEELIKSLHWGNDRKHVFLVIVKVNPTTHEGDVGLVIFPKYLLSPYHFKAEHRAPFPAGRFGFLSHPVTPDVSFFDSSFAPYLTTQHLVAFTTFPPNPLVWHLERAETAATAERPFGVSLLPARPTVPKNTILEHKAHFATWDALARHTFFSAEAIITNSTLRIHVPLFGSVWPIRYWATGSVLLTSDSGRVEVNIGVGFMSSLISLSSGPPIELIVVPHTVKLNAVTSDTTWFQLNPPGPDPGPSYRVYLLGRGLDMNFSKHATVDICAYPEESLDYRYHLSMAHTEALRMTTKADQHDINEESYYHIAARIATSIFALSEMGRTTEYFLLDEIVDVQYQLKFLNYILMRIGAGAHPNTISGTSDLIFADPSQLHDELSLLFGQVKPANVDYFISYDEARDQLKTAYALSRGQDHVNALSLARRVIMSIYKGLLVKQNLNATERQALFFASMILLNFREGLENSSRVLDGRTTLLLMTSMCTAAHATQAALNIQEGLAYLNPSKHMFTIPNVYSPCMGSLRTDLTEEIHVMNLLSAIPTRPGLNEVLHTQLDESEIFDAAFKTMMIFTTWTAKDLHILHTHVPEVFTCQDAAARNGEYVLILPAVQGHSYVITRNKPQRGLVYSLADVDVYNPISVVYLSRDTCVSEHGVIETVALPHPDNLKECLYCGSVFLRYLTTGAIMDIIIIDSKDTERQLAAMGNSTIPPFNPDMHGDDSKAVLLFPNGTVVTLLGFERRQAIRMSGQYLGASLGGAFLAVVGFGIIGWMLCGNSRLREYNKIPLT</sequence>
<accession>P09260</accession>
<organismHost>
    <name type="scientific">Homo sapiens</name>
    <name type="common">Human</name>
    <dbReference type="NCBI Taxonomy" id="9606"/>
</organismHost>
<keyword id="KW-1169">Fusion of virus membrane with host cell membrane</keyword>
<keyword id="KW-1168">Fusion of virus membrane with host membrane</keyword>
<keyword id="KW-0325">Glycoprotein</keyword>
<keyword id="KW-1032">Host cell membrane</keyword>
<keyword id="KW-1039">Host endosome</keyword>
<keyword id="KW-1043">Host membrane</keyword>
<keyword id="KW-0472">Membrane</keyword>
<keyword id="KW-1185">Reference proteome</keyword>
<keyword id="KW-0730">Sialic acid</keyword>
<keyword id="KW-0732">Signal</keyword>
<keyword id="KW-0812">Transmembrane</keyword>
<keyword id="KW-1133">Transmembrane helix</keyword>
<keyword id="KW-0261">Viral envelope protein</keyword>
<keyword id="KW-1162">Viral penetration into host cytoplasm</keyword>
<keyword id="KW-0946">Virion</keyword>
<keyword id="KW-1160">Virus entry into host cell</keyword>
<gene>
    <name evidence="1" type="primary">gH</name>
    <name type="ORF">ORF37</name>
</gene>
<protein>
    <recommendedName>
        <fullName evidence="1">Envelope glycoprotein H</fullName>
        <shortName evidence="1">gH</shortName>
    </recommendedName>
</protein>
<evidence type="ECO:0000255" key="1">
    <source>
        <dbReference type="HAMAP-Rule" id="MF_04033"/>
    </source>
</evidence>
<evidence type="ECO:0000269" key="2">
    <source>
    </source>
</evidence>
<comment type="function">
    <text evidence="1">The heterodimer glycoprotein H-glycoprotein L is required for the fusion of viral and plasma membranes leading to virus entry into the host cell. Following initial binding to host receptor, membrane fusion is mediated by the fusion machinery composed of gB and the heterodimer gH/gL. May also be involved in the fusion between the virion envelope and the outer nuclear membrane during virion morphogenesis.</text>
</comment>
<comment type="subunit">
    <text evidence="1">Interacts with glycoprotein L (gL); this interaction is necessary for the correct processing and cell surface expression of gH. The heterodimer gH/gL seems to interact with gB trimers during fusion.</text>
</comment>
<comment type="subcellular location">
    <subcellularLocation>
        <location evidence="1 2">Virion membrane</location>
        <topology evidence="1 2">Single-pass type I membrane protein</topology>
    </subcellularLocation>
    <subcellularLocation>
        <location evidence="1 2">Host cell membrane</location>
        <topology evidence="1 2">Single-pass type I membrane protein</topology>
    </subcellularLocation>
    <subcellularLocation>
        <location evidence="1 2">Host endosome membrane</location>
        <topology evidence="1 2">Single-pass type I membrane protein</topology>
    </subcellularLocation>
    <text evidence="1">During virion morphogenesis, this protein probably accumulates in the endosomes and trans-Golgi where secondary envelopment occurs. It is probably transported to the cell surface from where it is endocytosed and directed to the trans-Golgi network (TGN).</text>
</comment>
<comment type="PTM">
    <text evidence="1">N-glycosylated, O-glycosylated, and sialylated.</text>
</comment>
<comment type="similarity">
    <text evidence="1">Belongs to the herpesviridae glycoprotein H family.</text>
</comment>